<reference evidence="9" key="1">
    <citation type="journal article" date="2009" name="J. Proteome Res.">
        <title>Insight into the sialome of the Black Fly, Simulium vittatum.</title>
        <authorList>
            <person name="Andersen J.F."/>
            <person name="Pham V.M."/>
            <person name="Meng Z."/>
            <person name="Champagne D.E."/>
            <person name="Ribeiro J.M."/>
        </authorList>
    </citation>
    <scope>NUCLEOTIDE SEQUENCE [LARGE SCALE MRNA]</scope>
    <scope>IDENTIFICATION BY MASS SPECTROMETRY</scope>
    <scope>TISSUE SPECIFICITY</scope>
    <source>
        <tissue evidence="9">Salivary gland</tissue>
    </source>
</reference>
<reference evidence="8" key="2">
    <citation type="journal article" date="2012" name="PLoS ONE">
        <title>Simukunin from the salivary glands of the black fly Simulium vittatum inhibits enzymes that regulate clotting and inflammatory responses.</title>
        <authorList>
            <person name="Tsujimoto H."/>
            <person name="Kotsyfakis M."/>
            <person name="Francischetti I.M."/>
            <person name="Eum J.H."/>
            <person name="Strand M.R."/>
            <person name="Champagne D.E."/>
        </authorList>
    </citation>
    <scope>FUNCTION</scope>
    <scope>BIOPHYSICOCHEMICAL PROPERTIES</scope>
    <scope>INTERACTION WITH HOST F10 AND ELASTASE</scope>
    <scope>TISSUE SPECIFICITY</scope>
    <scope>INDUCTION</scope>
    <scope>MUTAGENESIS OF VAL-32; CYS-33; ARG-34 AND LYS-38</scope>
</reference>
<dbReference type="EMBL" id="EU930300">
    <property type="protein sequence ID" value="ACH56928.1"/>
    <property type="molecule type" value="mRNA"/>
</dbReference>
<dbReference type="SMR" id="B5M0W4"/>
<dbReference type="MEROPS" id="I02.968"/>
<dbReference type="GO" id="GO:0005615">
    <property type="term" value="C:extracellular space"/>
    <property type="evidence" value="ECO:0007669"/>
    <property type="project" value="TreeGrafter"/>
</dbReference>
<dbReference type="GO" id="GO:0004867">
    <property type="term" value="F:serine-type endopeptidase inhibitor activity"/>
    <property type="evidence" value="ECO:0007669"/>
    <property type="project" value="UniProtKB-KW"/>
</dbReference>
<dbReference type="CDD" id="cd00109">
    <property type="entry name" value="Kunitz-type"/>
    <property type="match status" value="1"/>
</dbReference>
<dbReference type="FunFam" id="4.10.410.10:FF:000004">
    <property type="entry name" value="Tissue factor pathway inhibitor"/>
    <property type="match status" value="1"/>
</dbReference>
<dbReference type="Gene3D" id="4.10.410.10">
    <property type="entry name" value="Pancreatic trypsin inhibitor Kunitz domain"/>
    <property type="match status" value="1"/>
</dbReference>
<dbReference type="InterPro" id="IPR002223">
    <property type="entry name" value="Kunitz_BPTI"/>
</dbReference>
<dbReference type="InterPro" id="IPR036880">
    <property type="entry name" value="Kunitz_BPTI_sf"/>
</dbReference>
<dbReference type="InterPro" id="IPR020901">
    <property type="entry name" value="Prtase_inh_Kunz-CS"/>
</dbReference>
<dbReference type="InterPro" id="IPR050098">
    <property type="entry name" value="TFPI/VKTCI-like"/>
</dbReference>
<dbReference type="PANTHER" id="PTHR10083:SF374">
    <property type="entry name" value="BPTI_KUNITZ INHIBITOR DOMAIN-CONTAINING PROTEIN"/>
    <property type="match status" value="1"/>
</dbReference>
<dbReference type="PANTHER" id="PTHR10083">
    <property type="entry name" value="KUNITZ-TYPE PROTEASE INHIBITOR-RELATED"/>
    <property type="match status" value="1"/>
</dbReference>
<dbReference type="Pfam" id="PF00014">
    <property type="entry name" value="Kunitz_BPTI"/>
    <property type="match status" value="1"/>
</dbReference>
<dbReference type="PRINTS" id="PR00759">
    <property type="entry name" value="BASICPTASE"/>
</dbReference>
<dbReference type="SMART" id="SM00131">
    <property type="entry name" value="KU"/>
    <property type="match status" value="1"/>
</dbReference>
<dbReference type="SUPFAM" id="SSF57362">
    <property type="entry name" value="BPTI-like"/>
    <property type="match status" value="1"/>
</dbReference>
<dbReference type="PROSITE" id="PS00280">
    <property type="entry name" value="BPTI_KUNITZ_1"/>
    <property type="match status" value="1"/>
</dbReference>
<dbReference type="PROSITE" id="PS50279">
    <property type="entry name" value="BPTI_KUNITZ_2"/>
    <property type="match status" value="1"/>
</dbReference>
<evidence type="ECO:0000255" key="1"/>
<evidence type="ECO:0000255" key="2">
    <source>
        <dbReference type="PROSITE-ProRule" id="PRU00031"/>
    </source>
</evidence>
<evidence type="ECO:0000256" key="3">
    <source>
        <dbReference type="SAM" id="MobiDB-lite"/>
    </source>
</evidence>
<evidence type="ECO:0000269" key="4">
    <source>
    </source>
</evidence>
<evidence type="ECO:0000269" key="5">
    <source>
    </source>
</evidence>
<evidence type="ECO:0000303" key="6">
    <source>
    </source>
</evidence>
<evidence type="ECO:0000303" key="7">
    <source>
    </source>
</evidence>
<evidence type="ECO:0000305" key="8"/>
<evidence type="ECO:0000312" key="9">
    <source>
        <dbReference type="EMBL" id="ACH56928.1"/>
    </source>
</evidence>
<sequence length="102" mass="11736">MNILPISAFFLLYLGHSLAQENVCNLPVDEGVCRALFKRFYYEPATDSCKEFYYGGCEGNGNRFKSKKECILKCQKNKQLIKTRKRKPKKTTKPPIPIISLD</sequence>
<keyword id="KW-1015">Disulfide bond</keyword>
<keyword id="KW-0646">Protease inhibitor</keyword>
<keyword id="KW-0964">Secreted</keyword>
<keyword id="KW-0722">Serine protease inhibitor</keyword>
<keyword id="KW-0732">Signal</keyword>
<protein>
    <recommendedName>
        <fullName evidence="7">Simukunin</fullName>
    </recommendedName>
    <alternativeName>
        <fullName evidence="6 7">SV-66</fullName>
    </alternativeName>
    <alternativeName>
        <fullName evidence="7">Simulium kunitz inhibitor</fullName>
    </alternativeName>
    <alternativeName>
        <fullName evidence="9">Single Kunitz protease inhibitor</fullName>
    </alternativeName>
</protein>
<comment type="function">
    <text evidence="5">Salivary anticoagulant that inhibits plasma clotting in the host (PubMed:22383955). Strongly inhibits host elastase, coagulation factors Xa (F10) and cathepsin G (CTSG) (PubMed:22383955). Inhibits host plasmin (PLG), kallikrein, trypsin, beta-tryptase and coagulation factor XIa (F11) (PubMed:22383955).</text>
</comment>
<comment type="biophysicochemical properties">
    <kinetics>
        <KM evidence="5">38 uM for host elastase</KM>
        <KM evidence="5">161 uM for host factor Xa (F10)</KM>
        <KM evidence="5">188 uM for host cathepsin G (CTSG)</KM>
    </kinetics>
</comment>
<comment type="subunit">
    <text evidence="5">Interacts with mouse, bovine and human coagulation factor X (F10) (activated) (PubMed:22383955). Interacts with host elastase (PubMed:22383955).</text>
</comment>
<comment type="subcellular location">
    <subcellularLocation>
        <location evidence="8">Secreted</location>
    </subcellularLocation>
</comment>
<comment type="tissue specificity">
    <text evidence="4 5">Salivary gland (at protein level) (PubMed:19166301). Not detected in female carcass without head and salivary glands (PubMed:22383955). Not detected in males (PubMed:22383955).</text>
</comment>
<comment type="induction">
    <text evidence="5">Constitutively expressed in female salivary gland; blood feeding does not affect expression.</text>
</comment>
<comment type="similarity">
    <text evidence="8">Belongs to the venom Kunitz-type family.</text>
</comment>
<organism evidence="9">
    <name type="scientific">Simulium vittatum</name>
    <name type="common">Striped black fly</name>
    <dbReference type="NCBI Taxonomy" id="7192"/>
    <lineage>
        <taxon>Eukaryota</taxon>
        <taxon>Metazoa</taxon>
        <taxon>Ecdysozoa</taxon>
        <taxon>Arthropoda</taxon>
        <taxon>Hexapoda</taxon>
        <taxon>Insecta</taxon>
        <taxon>Pterygota</taxon>
        <taxon>Neoptera</taxon>
        <taxon>Endopterygota</taxon>
        <taxon>Diptera</taxon>
        <taxon>Nematocera</taxon>
        <taxon>Chironomoidea</taxon>
        <taxon>Simuliidae</taxon>
        <taxon>Simulium</taxon>
    </lineage>
</organism>
<feature type="signal peptide" evidence="1">
    <location>
        <begin position="1"/>
        <end position="19"/>
    </location>
</feature>
<feature type="chain" id="PRO_5002834167" description="Simukunin" evidence="1">
    <location>
        <begin position="20"/>
        <end position="102"/>
    </location>
</feature>
<feature type="domain" description="BPTI/Kunitz inhibitor" evidence="2">
    <location>
        <begin position="24"/>
        <end position="74"/>
    </location>
</feature>
<feature type="region of interest" description="Disordered" evidence="3">
    <location>
        <begin position="83"/>
        <end position="102"/>
    </location>
</feature>
<feature type="compositionally biased region" description="Basic residues" evidence="3">
    <location>
        <begin position="83"/>
        <end position="92"/>
    </location>
</feature>
<feature type="disulfide bond" evidence="2">
    <location>
        <begin position="24"/>
        <end position="74"/>
    </location>
</feature>
<feature type="disulfide bond" evidence="2">
    <location>
        <begin position="33"/>
        <end position="57"/>
    </location>
</feature>
<feature type="disulfide bond" evidence="2">
    <location>
        <begin position="49"/>
        <end position="70"/>
    </location>
</feature>
<feature type="mutagenesis site" description="Reduces anti-coagulation activity." evidence="5">
    <original>V</original>
    <variation>A</variation>
    <location>
        <position position="32"/>
    </location>
</feature>
<feature type="mutagenesis site" description="Significantly reduces anti-coagulation activity." evidence="5">
    <original>C</original>
    <variation>A</variation>
    <location>
        <position position="33"/>
    </location>
</feature>
<feature type="mutagenesis site" description="Significantly reduces anti-coagulation activity." evidence="5">
    <original>R</original>
    <variation>A</variation>
    <location>
        <position position="34"/>
    </location>
</feature>
<feature type="mutagenesis site" description="Does not affect anti-coagulation activity." evidence="5">
    <original>K</original>
    <variation>A</variation>
    <location>
        <position position="38"/>
    </location>
</feature>
<proteinExistence type="evidence at protein level"/>
<accession>B5M0W4</accession>
<name>SV66_SIMVI</name>